<gene>
    <name evidence="6" type="primary">nlp-7</name>
    <name evidence="6" type="ORF">F18E9.2</name>
</gene>
<feature type="signal peptide" evidence="1">
    <location>
        <begin position="1"/>
        <end position="22"/>
    </location>
</feature>
<feature type="chain" id="PRO_5004187338" description="Neuropeptide-like protein 7" evidence="4">
    <location>
        <begin position="23"/>
        <end position="121"/>
    </location>
</feature>
<feature type="splice variant" id="VSP_058545" description="In isoform 2." evidence="4">
    <original>YFLFSNRLTCRC</original>
    <variation>FFSGAFGRK</variation>
    <location>
        <begin position="110"/>
        <end position="121"/>
    </location>
</feature>
<comment type="function">
    <text evidence="2 3">May regulate lifespan in response to food availability and oxidative stress.</text>
</comment>
<comment type="alternative products">
    <event type="alternative splicing"/>
    <isoform>
        <id>Q19569-1</id>
        <name evidence="6">a</name>
        <sequence type="displayed"/>
    </isoform>
    <isoform>
        <id>Q19569-2</id>
        <name evidence="7">2</name>
        <sequence type="described" ref="VSP_058545"/>
    </isoform>
</comment>
<comment type="induction">
    <text evidence="3">Up-regulated when diet is restricted.</text>
</comment>
<comment type="disruption phenotype">
    <text evidence="2 3">Reduced lifespan when diet is restricted, and in the presence of the oxidative stress inducer paraquat (PubMed:19783783). Increased pha-4 and cup-4 expression when diet is restricted (PubMed:19783783). RNAi-mediated knockdown reduces lifespan and resistance to the oxidative stress inducer paraquat (PubMed:19627265, PubMed:19783783). RNAi-mediated knockdown in an eat-2 mutant background rescues lifespan, but lifespan remains greater than in wild-type (PubMed:19783783).</text>
</comment>
<reference evidence="5" key="1">
    <citation type="journal article" date="1998" name="Science">
        <title>Genome sequence of the nematode C. elegans: a platform for investigating biology.</title>
        <authorList>
            <consortium name="The C. elegans sequencing consortium"/>
        </authorList>
    </citation>
    <scope>NUCLEOTIDE SEQUENCE [LARGE SCALE GENOMIC DNA]</scope>
    <source>
        <strain evidence="5">Bristol N2</strain>
    </source>
</reference>
<reference evidence="4" key="2">
    <citation type="journal article" date="2009" name="Aging Cell">
        <title>Oxidative stress and longevity in Caenorhabditis elegans as mediated by SKN-1.</title>
        <authorList>
            <person name="Park S.K."/>
            <person name="Tedesco P.M."/>
            <person name="Johnson T.E."/>
        </authorList>
    </citation>
    <scope>FUNCTION</scope>
    <scope>DISRUPTION PHENOTYPE</scope>
</reference>
<reference evidence="4" key="3">
    <citation type="journal article" date="2010" name="FASEB J.">
        <title>Life-span extension by dietary restriction is mediated by NLP-7 signaling and coelomocyte endocytosis in C. elegans.</title>
        <authorList>
            <person name="Park S.K."/>
            <person name="Link C.D."/>
            <person name="Johnson T.E."/>
        </authorList>
    </citation>
    <scope>FUNCTION</scope>
    <scope>INDUCTION</scope>
    <scope>DISRUPTION PHENOTYPE</scope>
</reference>
<accession>Q19569</accession>
<accession>H8W3Y5</accession>
<keyword id="KW-0025">Alternative splicing</keyword>
<keyword id="KW-0527">Neuropeptide</keyword>
<keyword id="KW-1185">Reference proteome</keyword>
<keyword id="KW-0732">Signal</keyword>
<proteinExistence type="evidence at transcript level"/>
<dbReference type="EMBL" id="BX284606">
    <property type="protein sequence ID" value="CCD68426.1"/>
    <property type="molecule type" value="Genomic_DNA"/>
</dbReference>
<dbReference type="EMBL" id="BX284606">
    <property type="protein sequence ID" value="CCG28151.1"/>
    <property type="molecule type" value="Genomic_DNA"/>
</dbReference>
<dbReference type="PIR" id="T16098">
    <property type="entry name" value="T16098"/>
</dbReference>
<dbReference type="RefSeq" id="NP_001257062.1">
    <molecule id="Q19569-2"/>
    <property type="nucleotide sequence ID" value="NM_001270133.4"/>
</dbReference>
<dbReference type="RefSeq" id="NP_001257063.1">
    <molecule id="Q19569-1"/>
    <property type="nucleotide sequence ID" value="NM_001270134.3"/>
</dbReference>
<dbReference type="SMR" id="Q19569"/>
<dbReference type="DIP" id="DIP-26780N"/>
<dbReference type="FunCoup" id="Q19569">
    <property type="interactions" value="1569"/>
</dbReference>
<dbReference type="STRING" id="6239.F18E9.2a.1"/>
<dbReference type="PaxDb" id="6239-F18E9.2a"/>
<dbReference type="EnsemblMetazoa" id="F18E9.2a.1">
    <molecule id="Q19569-1"/>
    <property type="protein sequence ID" value="F18E9.2a.1"/>
    <property type="gene ID" value="WBGene00003745"/>
</dbReference>
<dbReference type="EnsemblMetazoa" id="F18E9.2b.1">
    <molecule id="Q19569-2"/>
    <property type="protein sequence ID" value="F18E9.2b.1"/>
    <property type="gene ID" value="WBGene00003745"/>
</dbReference>
<dbReference type="GeneID" id="184647"/>
<dbReference type="KEGG" id="cel:CELE_F18E9.2"/>
<dbReference type="UCSC" id="F18E9.2">
    <molecule id="Q19569-1"/>
    <property type="organism name" value="c. elegans"/>
</dbReference>
<dbReference type="AGR" id="WB:WBGene00003745"/>
<dbReference type="CTD" id="184647"/>
<dbReference type="WormBase" id="F18E9.2a">
    <molecule id="Q19569-1"/>
    <property type="protein sequence ID" value="CE02659"/>
    <property type="gene ID" value="WBGene00003745"/>
    <property type="gene designation" value="nlp-7"/>
</dbReference>
<dbReference type="WormBase" id="F18E9.2b">
    <molecule id="Q19569-2"/>
    <property type="protein sequence ID" value="CE47167"/>
    <property type="gene ID" value="WBGene00003745"/>
    <property type="gene designation" value="nlp-7"/>
</dbReference>
<dbReference type="eggNOG" id="ENOG502TI7V">
    <property type="taxonomic scope" value="Eukaryota"/>
</dbReference>
<dbReference type="InParanoid" id="Q19569"/>
<dbReference type="OMA" id="YRAIRIQ"/>
<dbReference type="OrthoDB" id="5869001at2759"/>
<dbReference type="PRO" id="PR:Q19569"/>
<dbReference type="Proteomes" id="UP000001940">
    <property type="component" value="Chromosome X"/>
</dbReference>
<dbReference type="Bgee" id="WBGene00003745">
    <property type="expression patterns" value="Expressed in larva and 3 other cell types or tissues"/>
</dbReference>
<dbReference type="GO" id="GO:0008340">
    <property type="term" value="P:determination of adult lifespan"/>
    <property type="evidence" value="ECO:0000315"/>
    <property type="project" value="UniProtKB"/>
</dbReference>
<dbReference type="GO" id="GO:0007218">
    <property type="term" value="P:neuropeptide signaling pathway"/>
    <property type="evidence" value="ECO:0007669"/>
    <property type="project" value="UniProtKB-KW"/>
</dbReference>
<dbReference type="GO" id="GO:1901046">
    <property type="term" value="P:positive regulation of egg-laying behavior"/>
    <property type="evidence" value="ECO:0000315"/>
    <property type="project" value="UniProtKB"/>
</dbReference>
<dbReference type="GO" id="GO:0061771">
    <property type="term" value="P:response to caloric restriction"/>
    <property type="evidence" value="ECO:0000314"/>
    <property type="project" value="UniProtKB"/>
</dbReference>
<dbReference type="GO" id="GO:1901562">
    <property type="term" value="P:response to paraquat"/>
    <property type="evidence" value="ECO:0000315"/>
    <property type="project" value="UniProtKB"/>
</dbReference>
<protein>
    <recommendedName>
        <fullName evidence="6">Neuropeptide-like protein 7</fullName>
    </recommendedName>
</protein>
<sequence>MYIKAALLIVVLFGVASQITSALYLKQADFDDPRMFTSSFGKRSAIESEPQAYPKSYRAIRIQRRSMDDLDDPRLMTMSFGKRMILPSLADLHRYTMYDKRGSDIDDPRYFLFSNRLTCRC</sequence>
<evidence type="ECO:0000255" key="1"/>
<evidence type="ECO:0000269" key="2">
    <source>
    </source>
</evidence>
<evidence type="ECO:0000269" key="3">
    <source>
    </source>
</evidence>
<evidence type="ECO:0000305" key="4"/>
<evidence type="ECO:0000312" key="5">
    <source>
        <dbReference type="Proteomes" id="UP000001940"/>
    </source>
</evidence>
<evidence type="ECO:0000312" key="6">
    <source>
        <dbReference type="WormBase" id="F18E9.2a"/>
    </source>
</evidence>
<evidence type="ECO:0000312" key="7">
    <source>
        <dbReference type="WormBase" id="F18E9.2b"/>
    </source>
</evidence>
<organism evidence="5">
    <name type="scientific">Caenorhabditis elegans</name>
    <dbReference type="NCBI Taxonomy" id="6239"/>
    <lineage>
        <taxon>Eukaryota</taxon>
        <taxon>Metazoa</taxon>
        <taxon>Ecdysozoa</taxon>
        <taxon>Nematoda</taxon>
        <taxon>Chromadorea</taxon>
        <taxon>Rhabditida</taxon>
        <taxon>Rhabditina</taxon>
        <taxon>Rhabditomorpha</taxon>
        <taxon>Rhabditoidea</taxon>
        <taxon>Rhabditidae</taxon>
        <taxon>Peloderinae</taxon>
        <taxon>Caenorhabditis</taxon>
    </lineage>
</organism>
<name>NLP7_CAEEL</name>